<organism>
    <name type="scientific">Homo sapiens</name>
    <name type="common">Human</name>
    <dbReference type="NCBI Taxonomy" id="9606"/>
    <lineage>
        <taxon>Eukaryota</taxon>
        <taxon>Metazoa</taxon>
        <taxon>Chordata</taxon>
        <taxon>Craniata</taxon>
        <taxon>Vertebrata</taxon>
        <taxon>Euteleostomi</taxon>
        <taxon>Mammalia</taxon>
        <taxon>Eutheria</taxon>
        <taxon>Euarchontoglires</taxon>
        <taxon>Primates</taxon>
        <taxon>Haplorrhini</taxon>
        <taxon>Catarrhini</taxon>
        <taxon>Hominidae</taxon>
        <taxon>Homo</taxon>
    </lineage>
</organism>
<accession>P06870</accession>
<accession>Q66US9</accession>
<accession>Q86U61</accession>
<accession>Q8TCV8</accession>
<accession>Q9BS53</accession>
<accession>Q9NQU4</accession>
<accession>Q9UD19</accession>
<accession>Q9UMJ1</accession>
<protein>
    <recommendedName>
        <fullName>Kallikrein-1</fullName>
        <ecNumber>3.4.21.35</ecNumber>
    </recommendedName>
    <alternativeName>
        <fullName>Kidney/pancreas/salivary gland kallikrein</fullName>
    </alternativeName>
    <alternativeName>
        <fullName>Tissue kallikrein</fullName>
    </alternativeName>
</protein>
<keyword id="KW-0002">3D-structure</keyword>
<keyword id="KW-0025">Alternative splicing</keyword>
<keyword id="KW-0903">Direct protein sequencing</keyword>
<keyword id="KW-1015">Disulfide bond</keyword>
<keyword id="KW-0325">Glycoprotein</keyword>
<keyword id="KW-0378">Hydrolase</keyword>
<keyword id="KW-0645">Protease</keyword>
<keyword id="KW-1267">Proteomics identification</keyword>
<keyword id="KW-1185">Reference proteome</keyword>
<keyword id="KW-0720">Serine protease</keyword>
<keyword id="KW-0732">Signal</keyword>
<keyword id="KW-0865">Zymogen</keyword>
<gene>
    <name type="primary">KLK1</name>
</gene>
<name>KLK1_HUMAN</name>
<dbReference type="EC" id="3.4.21.35"/>
<dbReference type="EMBL" id="M25629">
    <property type="protein sequence ID" value="AAA36136.1"/>
    <property type="molecule type" value="mRNA"/>
</dbReference>
<dbReference type="EMBL" id="M33109">
    <property type="protein sequence ID" value="AAA59455.1"/>
    <property type="molecule type" value="Genomic_DNA"/>
</dbReference>
<dbReference type="EMBL" id="M33105">
    <property type="protein sequence ID" value="AAA59455.1"/>
    <property type="status" value="JOINED"/>
    <property type="molecule type" value="Genomic_DNA"/>
</dbReference>
<dbReference type="EMBL" id="M33106">
    <property type="protein sequence ID" value="AAA59455.1"/>
    <property type="status" value="JOINED"/>
    <property type="molecule type" value="Genomic_DNA"/>
</dbReference>
<dbReference type="EMBL" id="M33107">
    <property type="protein sequence ID" value="AAA59455.1"/>
    <property type="status" value="JOINED"/>
    <property type="molecule type" value="Genomic_DNA"/>
</dbReference>
<dbReference type="EMBL" id="M33108">
    <property type="protein sequence ID" value="AAA59455.1"/>
    <property type="status" value="JOINED"/>
    <property type="molecule type" value="Genomic_DNA"/>
</dbReference>
<dbReference type="EMBL" id="X13561">
    <property type="protein sequence ID" value="CAA31912.1"/>
    <property type="molecule type" value="mRNA"/>
</dbReference>
<dbReference type="EMBL" id="AF277050">
    <property type="protein sequence ID" value="AAF86333.1"/>
    <property type="molecule type" value="Genomic_DNA"/>
</dbReference>
<dbReference type="EMBL" id="AF243527">
    <property type="protein sequence ID" value="AAG33353.1"/>
    <property type="molecule type" value="Genomic_DNA"/>
</dbReference>
<dbReference type="EMBL" id="AY703451">
    <property type="protein sequence ID" value="AAU12569.1"/>
    <property type="molecule type" value="mRNA"/>
</dbReference>
<dbReference type="EMBL" id="BT007253">
    <property type="protein sequence ID" value="AAP35917.1"/>
    <property type="molecule type" value="mRNA"/>
</dbReference>
<dbReference type="EMBL" id="AY094609">
    <property type="protein sequence ID" value="AAM11874.1"/>
    <property type="molecule type" value="Genomic_DNA"/>
</dbReference>
<dbReference type="EMBL" id="AC010325">
    <property type="status" value="NOT_ANNOTATED_CDS"/>
    <property type="molecule type" value="Genomic_DNA"/>
</dbReference>
<dbReference type="EMBL" id="BC005313">
    <property type="protein sequence ID" value="AAH05313.1"/>
    <property type="molecule type" value="mRNA"/>
</dbReference>
<dbReference type="EMBL" id="M12706">
    <property type="protein sequence ID" value="AAA59201.1"/>
    <property type="molecule type" value="mRNA"/>
</dbReference>
<dbReference type="CCDS" id="CCDS12804.1">
    <molecule id="P06870-1"/>
</dbReference>
<dbReference type="PIR" id="A24696">
    <property type="entry name" value="KQHU"/>
</dbReference>
<dbReference type="PIR" id="B24696">
    <property type="entry name" value="B24696"/>
</dbReference>
<dbReference type="RefSeq" id="NP_002248.1">
    <molecule id="P06870-1"/>
    <property type="nucleotide sequence ID" value="NM_002257.4"/>
</dbReference>
<dbReference type="PDB" id="1SPJ">
    <property type="method" value="X-ray"/>
    <property type="resolution" value="1.70 A"/>
    <property type="chains" value="A=25-262"/>
</dbReference>
<dbReference type="PDB" id="8YGY">
    <property type="method" value="X-ray"/>
    <property type="resolution" value="2.40 A"/>
    <property type="chains" value="A=25-262"/>
</dbReference>
<dbReference type="PDBsum" id="1SPJ"/>
<dbReference type="PDBsum" id="8YGY"/>
<dbReference type="SMR" id="P06870"/>
<dbReference type="BioGRID" id="110016">
    <property type="interactions" value="48"/>
</dbReference>
<dbReference type="FunCoup" id="P06870">
    <property type="interactions" value="113"/>
</dbReference>
<dbReference type="IntAct" id="P06870">
    <property type="interactions" value="35"/>
</dbReference>
<dbReference type="STRING" id="9606.ENSP00000301420"/>
<dbReference type="BindingDB" id="P06870"/>
<dbReference type="ChEMBL" id="CHEMBL2319"/>
<dbReference type="DrugBank" id="DB01370">
    <property type="generic name" value="Aluminium"/>
</dbReference>
<dbReference type="DrugBank" id="DB14517">
    <property type="generic name" value="Aluminium phosphate"/>
</dbReference>
<dbReference type="DrugBank" id="DB14518">
    <property type="generic name" value="Aluminum acetate"/>
</dbReference>
<dbReference type="DrugBank" id="DB06728">
    <property type="generic name" value="Aniline"/>
</dbReference>
<dbReference type="DrugBank" id="DB06692">
    <property type="generic name" value="Aprotinin"/>
</dbReference>
<dbReference type="DrugBank" id="DB03127">
    <property type="generic name" value="Benzamidine"/>
</dbReference>
<dbReference type="DrugBank" id="DB06245">
    <property type="generic name" value="Lanoteplase"/>
</dbReference>
<dbReference type="DrugBank" id="DB12598">
    <property type="generic name" value="Nafamostat"/>
</dbReference>
<dbReference type="DrugCentral" id="P06870"/>
<dbReference type="GuidetoPHARMACOLOGY" id="2865"/>
<dbReference type="MEROPS" id="S01.160"/>
<dbReference type="GlyConnect" id="172">
    <property type="glycosylation" value="15 N-Linked glycans"/>
</dbReference>
<dbReference type="GlyCosmos" id="P06870">
    <property type="glycosylation" value="6 sites, 28 glycans"/>
</dbReference>
<dbReference type="GlyGen" id="P06870">
    <property type="glycosylation" value="7 sites, 28 N-linked glycans (4 sites)"/>
</dbReference>
<dbReference type="iPTMnet" id="P06870"/>
<dbReference type="PhosphoSitePlus" id="P06870"/>
<dbReference type="BioMuta" id="KLK1"/>
<dbReference type="DMDM" id="269849612"/>
<dbReference type="jPOST" id="P06870"/>
<dbReference type="MassIVE" id="P06870"/>
<dbReference type="PaxDb" id="9606-ENSP00000301420"/>
<dbReference type="PeptideAtlas" id="P06870"/>
<dbReference type="PRIDE" id="P06870"/>
<dbReference type="ProteomicsDB" id="51938">
    <molecule id="P06870-1"/>
</dbReference>
<dbReference type="ProteomicsDB" id="51939">
    <molecule id="P06870-2"/>
</dbReference>
<dbReference type="Antibodypedia" id="32372">
    <property type="antibodies" value="425 antibodies from 37 providers"/>
</dbReference>
<dbReference type="DNASU" id="3816"/>
<dbReference type="Ensembl" id="ENST00000301420.3">
    <molecule id="P06870-1"/>
    <property type="protein sequence ID" value="ENSP00000301420.1"/>
    <property type="gene ID" value="ENSG00000167748.11"/>
</dbReference>
<dbReference type="GeneID" id="3816"/>
<dbReference type="KEGG" id="hsa:3816"/>
<dbReference type="MANE-Select" id="ENST00000301420.3">
    <property type="protein sequence ID" value="ENSP00000301420.1"/>
    <property type="RefSeq nucleotide sequence ID" value="NM_002257.4"/>
    <property type="RefSeq protein sequence ID" value="NP_002248.1"/>
</dbReference>
<dbReference type="UCSC" id="uc002ptk.3">
    <molecule id="P06870-1"/>
    <property type="organism name" value="human"/>
</dbReference>
<dbReference type="AGR" id="HGNC:6357"/>
<dbReference type="CTD" id="3816"/>
<dbReference type="DisGeNET" id="3816"/>
<dbReference type="GeneCards" id="KLK1"/>
<dbReference type="HGNC" id="HGNC:6357">
    <property type="gene designation" value="KLK1"/>
</dbReference>
<dbReference type="HPA" id="ENSG00000167748">
    <property type="expression patterns" value="Group enriched (pancreas, salivary gland)"/>
</dbReference>
<dbReference type="MalaCards" id="KLK1"/>
<dbReference type="MIM" id="147910">
    <property type="type" value="gene"/>
</dbReference>
<dbReference type="MIM" id="615953">
    <property type="type" value="phenotype"/>
</dbReference>
<dbReference type="neXtProt" id="NX_P06870"/>
<dbReference type="OpenTargets" id="ENSG00000167748"/>
<dbReference type="PharmGKB" id="PA224"/>
<dbReference type="VEuPathDB" id="HostDB:ENSG00000167748"/>
<dbReference type="eggNOG" id="KOG3627">
    <property type="taxonomic scope" value="Eukaryota"/>
</dbReference>
<dbReference type="GeneTree" id="ENSGT01020000230389"/>
<dbReference type="HOGENOM" id="CLU_006842_1_1_1"/>
<dbReference type="InParanoid" id="P06870"/>
<dbReference type="OMA" id="FMLCAGQ"/>
<dbReference type="OrthoDB" id="10061449at2759"/>
<dbReference type="PAN-GO" id="P06870">
    <property type="GO annotations" value="3 GO annotations based on evolutionary models"/>
</dbReference>
<dbReference type="PhylomeDB" id="P06870"/>
<dbReference type="TreeFam" id="TF331065"/>
<dbReference type="BRENDA" id="3.4.21.35">
    <property type="organism ID" value="2681"/>
</dbReference>
<dbReference type="PathwayCommons" id="P06870"/>
<dbReference type="Reactome" id="R-HSA-381426">
    <property type="pathway name" value="Regulation of Insulin-like Growth Factor (IGF) transport and uptake by Insulin-like Growth Factor Binding Proteins (IGFBPs)"/>
</dbReference>
<dbReference type="Reactome" id="R-HSA-9925561">
    <property type="pathway name" value="Developmental Lineage of Pancreatic Acinar Cells"/>
</dbReference>
<dbReference type="SignaLink" id="P06870"/>
<dbReference type="BioGRID-ORCS" id="3816">
    <property type="hits" value="6 hits in 1157 CRISPR screens"/>
</dbReference>
<dbReference type="ChiTaRS" id="KLK1">
    <property type="organism name" value="human"/>
</dbReference>
<dbReference type="EvolutionaryTrace" id="P06870"/>
<dbReference type="GeneWiki" id="KLK1"/>
<dbReference type="GenomeRNAi" id="3816"/>
<dbReference type="Pharos" id="P06870">
    <property type="development level" value="Tchem"/>
</dbReference>
<dbReference type="PRO" id="PR:P06870"/>
<dbReference type="Proteomes" id="UP000005640">
    <property type="component" value="Chromosome 19"/>
</dbReference>
<dbReference type="RNAct" id="P06870">
    <property type="molecule type" value="protein"/>
</dbReference>
<dbReference type="Bgee" id="ENSG00000167748">
    <property type="expression patterns" value="Expressed in body of pancreas and 134 other cell types or tissues"/>
</dbReference>
<dbReference type="ExpressionAtlas" id="P06870">
    <property type="expression patterns" value="baseline and differential"/>
</dbReference>
<dbReference type="GO" id="GO:0070062">
    <property type="term" value="C:extracellular exosome"/>
    <property type="evidence" value="ECO:0007005"/>
    <property type="project" value="UniProtKB"/>
</dbReference>
<dbReference type="GO" id="GO:0005615">
    <property type="term" value="C:extracellular space"/>
    <property type="evidence" value="ECO:0000318"/>
    <property type="project" value="GO_Central"/>
</dbReference>
<dbReference type="GO" id="GO:0005634">
    <property type="term" value="C:nucleus"/>
    <property type="evidence" value="ECO:0000314"/>
    <property type="project" value="UniProtKB"/>
</dbReference>
<dbReference type="GO" id="GO:0030141">
    <property type="term" value="C:secretory granule"/>
    <property type="evidence" value="ECO:0000318"/>
    <property type="project" value="GO_Central"/>
</dbReference>
<dbReference type="GO" id="GO:0004252">
    <property type="term" value="F:serine-type endopeptidase activity"/>
    <property type="evidence" value="ECO:0000318"/>
    <property type="project" value="GO_Central"/>
</dbReference>
<dbReference type="GO" id="GO:0003073">
    <property type="term" value="P:regulation of systemic arterial blood pressure"/>
    <property type="evidence" value="ECO:0000318"/>
    <property type="project" value="GO_Central"/>
</dbReference>
<dbReference type="GO" id="GO:0031638">
    <property type="term" value="P:zymogen activation"/>
    <property type="evidence" value="ECO:0000318"/>
    <property type="project" value="GO_Central"/>
</dbReference>
<dbReference type="CDD" id="cd00190">
    <property type="entry name" value="Tryp_SPc"/>
    <property type="match status" value="1"/>
</dbReference>
<dbReference type="FunFam" id="2.40.10.10:FF:000032">
    <property type="entry name" value="Kallikrein 1-related peptidase C9"/>
    <property type="match status" value="1"/>
</dbReference>
<dbReference type="FunFam" id="2.40.10.10:FF:000042">
    <property type="entry name" value="Kallikrein 1-related peptidase C9"/>
    <property type="match status" value="1"/>
</dbReference>
<dbReference type="Gene3D" id="2.40.10.10">
    <property type="entry name" value="Trypsin-like serine proteases"/>
    <property type="match status" value="2"/>
</dbReference>
<dbReference type="InterPro" id="IPR009003">
    <property type="entry name" value="Peptidase_S1_PA"/>
</dbReference>
<dbReference type="InterPro" id="IPR043504">
    <property type="entry name" value="Peptidase_S1_PA_chymotrypsin"/>
</dbReference>
<dbReference type="InterPro" id="IPR001314">
    <property type="entry name" value="Peptidase_S1A"/>
</dbReference>
<dbReference type="InterPro" id="IPR001254">
    <property type="entry name" value="Trypsin_dom"/>
</dbReference>
<dbReference type="InterPro" id="IPR018114">
    <property type="entry name" value="TRYPSIN_HIS"/>
</dbReference>
<dbReference type="InterPro" id="IPR033116">
    <property type="entry name" value="TRYPSIN_SER"/>
</dbReference>
<dbReference type="PANTHER" id="PTHR24271:SF47">
    <property type="entry name" value="KALLIKREIN-1"/>
    <property type="match status" value="1"/>
</dbReference>
<dbReference type="PANTHER" id="PTHR24271">
    <property type="entry name" value="KALLIKREIN-RELATED"/>
    <property type="match status" value="1"/>
</dbReference>
<dbReference type="Pfam" id="PF00089">
    <property type="entry name" value="Trypsin"/>
    <property type="match status" value="1"/>
</dbReference>
<dbReference type="PRINTS" id="PR00722">
    <property type="entry name" value="CHYMOTRYPSIN"/>
</dbReference>
<dbReference type="SMART" id="SM00020">
    <property type="entry name" value="Tryp_SPc"/>
    <property type="match status" value="1"/>
</dbReference>
<dbReference type="SUPFAM" id="SSF50494">
    <property type="entry name" value="Trypsin-like serine proteases"/>
    <property type="match status" value="1"/>
</dbReference>
<dbReference type="PROSITE" id="PS50240">
    <property type="entry name" value="TRYPSIN_DOM"/>
    <property type="match status" value="1"/>
</dbReference>
<dbReference type="PROSITE" id="PS00134">
    <property type="entry name" value="TRYPSIN_HIS"/>
    <property type="match status" value="1"/>
</dbReference>
<dbReference type="PROSITE" id="PS00135">
    <property type="entry name" value="TRYPSIN_SER"/>
    <property type="match status" value="1"/>
</dbReference>
<proteinExistence type="evidence at protein level"/>
<sequence>MWFLVLCLALSLGGTGAAPPIQSRIVGGWECEQHSQPWQAALYHFSTFQCGGILVHRQWVLTAAHCISDNYQLWLGRHNLFDDENTAQFVHVSESFPHPGFNMSLLENHTRQADEDYSHDLMLLRLTEPADTITDAVKVVELPTEEPEVGSTCLASGWGSIEPENFSFPDDLQCVDLKILPNDECKKAHVQKVTDFMLCVGHLEGGKDTCVGDSGGPLMCDGVLQGVTSWGYVPCGTPNKPSVAVRVLSYVKWIEDTIAENS</sequence>
<feature type="signal peptide" evidence="16">
    <location>
        <begin position="1"/>
        <end position="18"/>
    </location>
</feature>
<feature type="propeptide" id="PRO_0000027923" description="Activation peptide" evidence="16">
    <location>
        <begin position="19"/>
        <end position="24"/>
    </location>
</feature>
<feature type="chain" id="PRO_0000027924" description="Kallikrein-1">
    <location>
        <begin position="25"/>
        <end position="262"/>
    </location>
</feature>
<feature type="domain" description="Peptidase S1" evidence="1">
    <location>
        <begin position="25"/>
        <end position="259"/>
    </location>
</feature>
<feature type="active site" description="Charge relay system">
    <location>
        <position position="65"/>
    </location>
</feature>
<feature type="active site" description="Charge relay system">
    <location>
        <position position="120"/>
    </location>
</feature>
<feature type="active site" description="Charge relay system">
    <location>
        <position position="214"/>
    </location>
</feature>
<feature type="glycosylation site" description="O-linked (GalNAc...) serine" evidence="9">
    <location>
        <position position="93"/>
    </location>
</feature>
<feature type="glycosylation site" description="N-linked (GlcNAc...) asparagine" evidence="9">
    <location>
        <position position="102"/>
    </location>
</feature>
<feature type="glycosylation site" description="O-linked (GalNAc...) serine" evidence="9">
    <location>
        <position position="104"/>
    </location>
</feature>
<feature type="glycosylation site" description="N-linked (GlcNAc...) asparagine" evidence="4 9">
    <location>
        <position position="108"/>
    </location>
</feature>
<feature type="glycosylation site" description="N-linked (GlcNAc...) asparagine; partial" evidence="9">
    <location>
        <position position="165"/>
    </location>
</feature>
<feature type="glycosylation site" description="O-linked (GalNAc...) serine" evidence="9">
    <location>
        <position position="167"/>
    </location>
</feature>
<feature type="disulfide bond" evidence="1 4">
    <location>
        <begin position="31"/>
        <end position="174"/>
    </location>
</feature>
<feature type="disulfide bond" evidence="1 4">
    <location>
        <begin position="50"/>
        <end position="66"/>
    </location>
</feature>
<feature type="disulfide bond" evidence="1 4">
    <location>
        <begin position="153"/>
        <end position="220"/>
    </location>
</feature>
<feature type="disulfide bond" evidence="1 4">
    <location>
        <begin position="185"/>
        <end position="199"/>
    </location>
</feature>
<feature type="disulfide bond" evidence="1 4">
    <location>
        <begin position="210"/>
        <end position="235"/>
    </location>
</feature>
<feature type="splice variant" id="VSP_037483" description="In isoform 2." evidence="15">
    <original>MWFLVLCLALSLGGTGAAPPIQSRIVGGWECEQHSQPWQAALYHFSTFQCGGILVHRQWVLTAAHCISD</original>
    <variation>MLPCPIPFSPSRLLIPPFPSFPS</variation>
    <location>
        <begin position="1"/>
        <end position="69"/>
    </location>
</feature>
<feature type="sequence variant" id="VAR_014567" description="Associated with a significant decrease in urinary kallikrein activity; dbSNP:rs5515." evidence="2">
    <original>R</original>
    <variation>H</variation>
    <location>
        <position position="77"/>
    </location>
</feature>
<feature type="sequence variant" id="VAR_006625" description="Not associated with changes in urinary kallikrein activity; dbSNP:rs5516." evidence="2 3 6 7 10 12 13 14">
    <original>E</original>
    <variation>Q</variation>
    <location>
        <position position="145"/>
    </location>
</feature>
<feature type="sequence variant" id="VAR_006626" description="In dbSNP:rs5517." evidence="7 10 12">
    <original>K</original>
    <variation>E</variation>
    <location>
        <position position="186"/>
    </location>
</feature>
<feature type="sequence variant" id="VAR_014568" description="In dbSNP:rs5518.">
    <original>V</original>
    <variation>E</variation>
    <location>
        <position position="193"/>
    </location>
</feature>
<feature type="sequence conflict" description="In Ref. 7; AAU12569." evidence="16" ref="7">
    <original>D</original>
    <variation>N</variation>
    <location>
        <position position="114"/>
    </location>
</feature>
<feature type="sequence conflict" description="In Ref. 7; AAU12569." evidence="16" ref="7">
    <original>V</original>
    <variation>F</variation>
    <location>
        <position position="139"/>
    </location>
</feature>
<feature type="sequence conflict" description="In Ref. 8; AAP35917 and 11; AAH05313." evidence="16" ref="8 11">
    <original>A</original>
    <variation>V</variation>
    <location>
        <position position="188"/>
    </location>
</feature>
<feature type="strand" evidence="17">
    <location>
        <begin position="39"/>
        <end position="44"/>
    </location>
</feature>
<feature type="strand" evidence="17">
    <location>
        <begin position="47"/>
        <end position="56"/>
    </location>
</feature>
<feature type="strand" evidence="17">
    <location>
        <begin position="59"/>
        <end position="62"/>
    </location>
</feature>
<feature type="helix" evidence="17">
    <location>
        <begin position="64"/>
        <end position="66"/>
    </location>
</feature>
<feature type="strand" evidence="17">
    <location>
        <begin position="69"/>
        <end position="76"/>
    </location>
</feature>
<feature type="strand" evidence="18">
    <location>
        <begin position="78"/>
        <end position="82"/>
    </location>
</feature>
<feature type="strand" evidence="17">
    <location>
        <begin position="88"/>
        <end position="90"/>
    </location>
</feature>
<feature type="strand" evidence="17">
    <location>
        <begin position="92"/>
        <end position="97"/>
    </location>
</feature>
<feature type="helix" evidence="17">
    <location>
        <begin position="103"/>
        <end position="106"/>
    </location>
</feature>
<feature type="turn" evidence="17">
    <location>
        <begin position="112"/>
        <end position="114"/>
    </location>
</feature>
<feature type="strand" evidence="17">
    <location>
        <begin position="122"/>
        <end position="128"/>
    </location>
</feature>
<feature type="strand" evidence="17">
    <location>
        <begin position="152"/>
        <end position="159"/>
    </location>
</feature>
<feature type="strand" evidence="17">
    <location>
        <begin position="161"/>
        <end position="165"/>
    </location>
</feature>
<feature type="strand" evidence="17">
    <location>
        <begin position="173"/>
        <end position="180"/>
    </location>
</feature>
<feature type="helix" evidence="17">
    <location>
        <begin position="182"/>
        <end position="188"/>
    </location>
</feature>
<feature type="strand" evidence="17">
    <location>
        <begin position="197"/>
        <end position="201"/>
    </location>
</feature>
<feature type="strand" evidence="17">
    <location>
        <begin position="206"/>
        <end position="208"/>
    </location>
</feature>
<feature type="strand" evidence="17">
    <location>
        <begin position="217"/>
        <end position="220"/>
    </location>
</feature>
<feature type="strand" evidence="17">
    <location>
        <begin position="223"/>
        <end position="230"/>
    </location>
</feature>
<feature type="strand" evidence="17">
    <location>
        <begin position="242"/>
        <end position="246"/>
    </location>
</feature>
<feature type="helix" evidence="17">
    <location>
        <begin position="247"/>
        <end position="250"/>
    </location>
</feature>
<feature type="helix" evidence="17">
    <location>
        <begin position="251"/>
        <end position="260"/>
    </location>
</feature>
<reference key="1">
    <citation type="journal article" date="1985" name="Biochemistry">
        <title>Nucleotide sequence of cloned cDNA for human pancreatic kallikrein.</title>
        <authorList>
            <person name="Fukushima D."/>
            <person name="Kitamura N."/>
            <person name="Nakanishi S."/>
        </authorList>
    </citation>
    <scope>NUCLEOTIDE SEQUENCE [MRNA] (ISOFORM 1)</scope>
    <scope>VARIANTS GLN-145 AND GLU-186</scope>
    <source>
        <tissue>Pancreas</tissue>
    </source>
</reference>
<reference key="2">
    <citation type="journal article" date="1988" name="Biochemistry">
        <title>Structure and chromosomal localization of the human renal kallikrein gene.</title>
        <authorList>
            <person name="Evans B.A."/>
            <person name="Yun Z.X."/>
            <person name="Close J.A."/>
            <person name="Tregear G.W."/>
            <person name="Kitamura N."/>
            <person name="Nakanishi S."/>
            <person name="Callen D.F."/>
            <person name="Baker E."/>
            <person name="Hyland V.J."/>
            <person name="Sutherland G.R."/>
            <person name="Richards R.I."/>
        </authorList>
    </citation>
    <scope>NUCLEOTIDE SEQUENCE [GENOMIC DNA]</scope>
    <scope>VARIANT GLN-145</scope>
    <source>
        <tissue>Kidney</tissue>
    </source>
</reference>
<reference key="3">
    <citation type="journal article" date="1989" name="Biochem. J.">
        <title>Cloning and expression of human salivary-gland kallikrein in Escherichia coli.</title>
        <authorList>
            <person name="Angermann A."/>
            <person name="Bergmann C."/>
            <person name="Appelhans H."/>
        </authorList>
    </citation>
    <scope>NUCLEOTIDE SEQUENCE [MRNA] (ISOFORM 1)</scope>
    <source>
        <tissue>Salivary gland</tissue>
    </source>
</reference>
<reference key="4">
    <citation type="journal article" date="1994" name="Braz. J. Med. Biol. Res.">
        <title>Molecular cloning and characterization of a novel kallikrein transcript in colon and its distribution in human tissues.</title>
        <authorList>
            <person name="Chen L.-M."/>
            <person name="Murray S.R."/>
            <person name="Chai K.X."/>
            <person name="Chao L."/>
            <person name="Chao J."/>
        </authorList>
    </citation>
    <scope>NUCLEOTIDE SEQUENCE [MRNA] (ISOFORM 2)</scope>
    <scope>ALTERNATIVE SPLICING</scope>
    <scope>TISSUE SPECIFICITY</scope>
</reference>
<reference key="5">
    <citation type="journal article" date="2000" name="Biochem. Biophys. Res. Commun.">
        <title>Genomic organization of the human kallikrein gene family on chromosome 19q13.3-q13.4.</title>
        <authorList>
            <person name="Yousef G.M."/>
            <person name="Chang A."/>
            <person name="Scorilas A."/>
            <person name="Diamandis E.P."/>
        </authorList>
    </citation>
    <scope>NUCLEOTIDE SEQUENCE [GENOMIC DNA]</scope>
</reference>
<reference key="6">
    <citation type="journal article" date="2000" name="Gene">
        <title>Sequencing and expression analysis of the serine protease gene cluster located in chromosome 19q13 region.</title>
        <authorList>
            <person name="Gan L."/>
            <person name="Lee I."/>
            <person name="Smith R."/>
            <person name="Argonza-Barrett R."/>
            <person name="Lei H."/>
            <person name="McCuaig J."/>
            <person name="Moss P."/>
            <person name="Paeper B."/>
            <person name="Wang K."/>
        </authorList>
    </citation>
    <scope>NUCLEOTIDE SEQUENCE [GENOMIC DNA]</scope>
</reference>
<reference key="7">
    <citation type="submission" date="2004-08" db="EMBL/GenBank/DDBJ databases">
        <title>Kallikrein cDNA from the pancreas of a Chinese patient.</title>
        <authorList>
            <person name="Li T."/>
            <person name="Du G."/>
            <person name="Dai Y."/>
        </authorList>
    </citation>
    <scope>NUCLEOTIDE SEQUENCE [MRNA] (ISOFORM 1)</scope>
    <scope>VARIANTS GLN-145 AND GLU-186</scope>
</reference>
<reference key="8">
    <citation type="submission" date="2003-05" db="EMBL/GenBank/DDBJ databases">
        <title>Cloning of human full-length CDSs in BD Creator(TM) system donor vector.</title>
        <authorList>
            <person name="Kalnine N."/>
            <person name="Chen X."/>
            <person name="Rolfs A."/>
            <person name="Halleck A."/>
            <person name="Hines L."/>
            <person name="Eisenstein S."/>
            <person name="Koundinya M."/>
            <person name="Raphael J."/>
            <person name="Moreira D."/>
            <person name="Kelley T."/>
            <person name="LaBaer J."/>
            <person name="Lin Y."/>
            <person name="Phelan M."/>
            <person name="Farmer A."/>
        </authorList>
    </citation>
    <scope>NUCLEOTIDE SEQUENCE [LARGE SCALE MRNA] (ISOFORM 1)</scope>
    <scope>VARIANT GLN-145</scope>
</reference>
<reference key="9">
    <citation type="submission" date="2002-04" db="EMBL/GenBank/DDBJ databases">
        <authorList>
            <consortium name="SeattleSNPs variation discovery resource"/>
        </authorList>
    </citation>
    <scope>NUCLEOTIDE SEQUENCE [GENOMIC DNA]</scope>
    <scope>VARIANT GLN-145</scope>
</reference>
<reference key="10">
    <citation type="journal article" date="2004" name="Nature">
        <title>The DNA sequence and biology of human chromosome 19.</title>
        <authorList>
            <person name="Grimwood J."/>
            <person name="Gordon L.A."/>
            <person name="Olsen A.S."/>
            <person name="Terry A."/>
            <person name="Schmutz J."/>
            <person name="Lamerdin J.E."/>
            <person name="Hellsten U."/>
            <person name="Goodstein D."/>
            <person name="Couronne O."/>
            <person name="Tran-Gyamfi M."/>
            <person name="Aerts A."/>
            <person name="Altherr M."/>
            <person name="Ashworth L."/>
            <person name="Bajorek E."/>
            <person name="Black S."/>
            <person name="Branscomb E."/>
            <person name="Caenepeel S."/>
            <person name="Carrano A.V."/>
            <person name="Caoile C."/>
            <person name="Chan Y.M."/>
            <person name="Christensen M."/>
            <person name="Cleland C.A."/>
            <person name="Copeland A."/>
            <person name="Dalin E."/>
            <person name="Dehal P."/>
            <person name="Denys M."/>
            <person name="Detter J.C."/>
            <person name="Escobar J."/>
            <person name="Flowers D."/>
            <person name="Fotopulos D."/>
            <person name="Garcia C."/>
            <person name="Georgescu A.M."/>
            <person name="Glavina T."/>
            <person name="Gomez M."/>
            <person name="Gonzales E."/>
            <person name="Groza M."/>
            <person name="Hammon N."/>
            <person name="Hawkins T."/>
            <person name="Haydu L."/>
            <person name="Ho I."/>
            <person name="Huang W."/>
            <person name="Israni S."/>
            <person name="Jett J."/>
            <person name="Kadner K."/>
            <person name="Kimball H."/>
            <person name="Kobayashi A."/>
            <person name="Larionov V."/>
            <person name="Leem S.-H."/>
            <person name="Lopez F."/>
            <person name="Lou Y."/>
            <person name="Lowry S."/>
            <person name="Malfatti S."/>
            <person name="Martinez D."/>
            <person name="McCready P.M."/>
            <person name="Medina C."/>
            <person name="Morgan J."/>
            <person name="Nelson K."/>
            <person name="Nolan M."/>
            <person name="Ovcharenko I."/>
            <person name="Pitluck S."/>
            <person name="Pollard M."/>
            <person name="Popkie A.P."/>
            <person name="Predki P."/>
            <person name="Quan G."/>
            <person name="Ramirez L."/>
            <person name="Rash S."/>
            <person name="Retterer J."/>
            <person name="Rodriguez A."/>
            <person name="Rogers S."/>
            <person name="Salamov A."/>
            <person name="Salazar A."/>
            <person name="She X."/>
            <person name="Smith D."/>
            <person name="Slezak T."/>
            <person name="Solovyev V."/>
            <person name="Thayer N."/>
            <person name="Tice H."/>
            <person name="Tsai M."/>
            <person name="Ustaszewska A."/>
            <person name="Vo N."/>
            <person name="Wagner M."/>
            <person name="Wheeler J."/>
            <person name="Wu K."/>
            <person name="Xie G."/>
            <person name="Yang J."/>
            <person name="Dubchak I."/>
            <person name="Furey T.S."/>
            <person name="DeJong P."/>
            <person name="Dickson M."/>
            <person name="Gordon D."/>
            <person name="Eichler E.E."/>
            <person name="Pennacchio L.A."/>
            <person name="Richardson P."/>
            <person name="Stubbs L."/>
            <person name="Rokhsar D.S."/>
            <person name="Myers R.M."/>
            <person name="Rubin E.M."/>
            <person name="Lucas S.M."/>
        </authorList>
    </citation>
    <scope>NUCLEOTIDE SEQUENCE [LARGE SCALE GENOMIC DNA]</scope>
</reference>
<reference key="11">
    <citation type="journal article" date="2004" name="Genome Res.">
        <title>The status, quality, and expansion of the NIH full-length cDNA project: the Mammalian Gene Collection (MGC).</title>
        <authorList>
            <consortium name="The MGC Project Team"/>
        </authorList>
    </citation>
    <scope>NUCLEOTIDE SEQUENCE [LARGE SCALE MRNA] (ISOFORM 1)</scope>
    <scope>VARIANT GLN-145</scope>
    <source>
        <tissue>Pancreas</tissue>
    </source>
</reference>
<reference key="12">
    <citation type="journal article" date="1985" name="DNA">
        <title>Human kidney kallikrein: cDNA cloning and sequence analysis.</title>
        <authorList>
            <person name="Baker A.R."/>
            <person name="Shine J."/>
        </authorList>
    </citation>
    <scope>NUCLEOTIDE SEQUENCE [MRNA] OF 18-262 (ISOFORM 1)</scope>
    <scope>VARIANTS GLN-145 AND GLU-186</scope>
    <source>
        <tissue>Kidney</tissue>
    </source>
</reference>
<reference key="13">
    <citation type="journal article" date="1988" name="Protein Seq. Data Anal.">
        <title>Human urinary kallikrein -- amino acid sequence and carbohydrate attachment sites.</title>
        <authorList>
            <person name="Kellermann J."/>
            <person name="Lottspeich F."/>
            <person name="Geiger R."/>
            <person name="Deutzmann R."/>
        </authorList>
    </citation>
    <scope>PROTEIN SEQUENCE OF 25-262 (ISOFORM 1)</scope>
    <scope>GLYCOSYLATION AT SER-93; ASN-102; SER-104; ASN-108; ASN-165 AND SER-167</scope>
    <source>
        <tissue>Urine</tissue>
    </source>
</reference>
<reference key="14">
    <citation type="journal article" date="1989" name="Int. J. Pept. Protein Res.">
        <title>Human urinary kallikrein. Complete amino acid sequence and sites of glycosylation.</title>
        <authorList>
            <person name="Lu H.S."/>
            <person name="Lin F.-K."/>
            <person name="Chao L."/>
            <person name="Chao J."/>
        </authorList>
    </citation>
    <scope>PROTEIN SEQUENCE OF 25-262 (ISOFORM 1)</scope>
    <source>
        <tissue>Urine</tissue>
    </source>
</reference>
<reference key="15">
    <citation type="journal article" date="1979" name="Hoppe-Seyler's Z. Physiol. Chem.">
        <title>N-terminal amino acid sequence of human urinary kallikrein homology with other serine proteases.</title>
        <authorList>
            <person name="Lottspeich F."/>
            <person name="Geiger R."/>
            <person name="Henschen A."/>
            <person name="Kutzbach C."/>
        </authorList>
    </citation>
    <scope>PROTEIN SEQUENCE OF 25-55 (ISOFORM 1)</scope>
    <source>
        <tissue>Urine</tissue>
    </source>
</reference>
<reference key="16">
    <citation type="journal article" date="1986" name="J. Biochem.">
        <title>N-terminal amino acid sequence of human urinary prokallikrein.</title>
        <authorList>
            <person name="Takahashi S."/>
            <person name="Irie A."/>
            <person name="Katayama Y."/>
            <person name="Ito K."/>
            <person name="Miyake Y."/>
        </authorList>
    </citation>
    <scope>PROTEIN SEQUENCE OF 28-47 (ISOFORM 1)</scope>
    <source>
        <tissue>Urine</tissue>
    </source>
</reference>
<reference key="17">
    <citation type="journal article" date="2019" name="PLoS ONE">
        <title>NHBA is processed by kallikrein from human saliva.</title>
        <authorList>
            <person name="Pantano E."/>
            <person name="Marchi S."/>
            <person name="Biagini M."/>
            <person name="Di Fede M."/>
            <person name="Nardi Dei V."/>
            <person name="Rossi Paccani S."/>
            <person name="Pizza M."/>
            <person name="Cartocci E."/>
        </authorList>
    </citation>
    <scope>CLEAVES N.MENINGITIDIS NHBA (MICROBIAL INFECTION)</scope>
</reference>
<reference key="18">
    <citation type="journal article" date="2005" name="Proteins">
        <title>1.70 A X-ray structure of human apo kallikrein 1: structural changes upon peptide inhibitor/substrate binding.</title>
        <authorList>
            <person name="Laxmikanthan G."/>
            <person name="Blaber S.I."/>
            <person name="Bernett M.J."/>
            <person name="Scarisbrick I.A."/>
            <person name="Juliano M.A."/>
            <person name="Blaber M."/>
        </authorList>
    </citation>
    <scope>X-RAY CRYSTALLOGRAPHY (1.7 ANGSTROMS) OF 25-262</scope>
    <scope>GLYCOSYLATION AT ASN-108</scope>
    <scope>DISULFIDE BONDS</scope>
</reference>
<reference key="19">
    <citation type="journal article" date="2002" name="J. Am. Soc. Nephrol.">
        <title>Loss-of-function polymorphism of the human kallikrein gene with reduced urinary kallikrein activity.</title>
        <authorList>
            <person name="Slim R."/>
            <person name="Torremocha F."/>
            <person name="Moreau T."/>
            <person name="Pizard A."/>
            <person name="Hunt S.C."/>
            <person name="Vuagnat A."/>
            <person name="Williams G.H."/>
            <person name="Gauthier F."/>
            <person name="Jeunemaitre X."/>
            <person name="Alhenc-Gelas F."/>
        </authorList>
    </citation>
    <scope>CHARACTERIZATION OF VARIANTS HIS-77 AND GLN-145</scope>
    <scope>POLYMORPHISM</scope>
</reference>
<reference key="20">
    <citation type="journal article" date="2005" name="J. Clin. Invest.">
        <title>Arterial and renal consequences of partial genetic deficiency in tissue kallikrein activity in humans.</title>
        <authorList>
            <person name="Azizi M."/>
            <person name="Boutouyrie P."/>
            <person name="Bissery A."/>
            <person name="Agharazii M."/>
            <person name="Verbeke F."/>
            <person name="Stern N."/>
            <person name="Bura-Riviere A."/>
            <person name="Laurent S."/>
            <person name="Alhenc-Gelas F."/>
            <person name="Jeunemaitre X."/>
        </authorList>
    </citation>
    <scope>POLYMORPHISM</scope>
</reference>
<comment type="function">
    <text>Glandular kallikreins cleave Met-Lys and Arg-Ser bonds in kininogen to release Lys-bradykinin.</text>
</comment>
<comment type="function">
    <text evidence="8">(Microbial infection) Cleaves Neisseria meningitidis NHBA in saliva; Neisseria is an obligate commensal of the nasopharyngeal mucosa.</text>
</comment>
<comment type="catalytic activity">
    <reaction>
        <text>Preferential cleavage of Arg-|-Xaa bonds in small molecule substrates. Highly selective action to release kallidin (lysyl-bradykinin) from kininogen involves hydrolysis of Met-|-Xaa or Leu-|-Xaa.</text>
        <dbReference type="EC" id="3.4.21.35"/>
    </reaction>
</comment>
<comment type="alternative products">
    <event type="alternative splicing"/>
    <isoform>
        <id>P06870-1</id>
        <name>1</name>
        <sequence type="displayed"/>
    </isoform>
    <isoform>
        <id>P06870-2</id>
        <name>2</name>
        <sequence type="described" ref="VSP_037483"/>
    </isoform>
</comment>
<comment type="tissue specificity">
    <text evidence="11">Isoform 2 is expressed in pancreas, salivary glands, kidney, colon, prostate gland, testis, spleen and the colon adenocarcinoma cell line T84.</text>
</comment>
<comment type="PTM">
    <text evidence="4 9">The O-linked polysaccharides on Ser-93, Ser-104 and Ser-167 are probably the mucin type linked to GalNAc. In PubMed:3163150, GalNAc was detected with the corresponding peptides but not located.</text>
</comment>
<comment type="polymorphism">
    <text evidence="2 5">Genetic variations in KLK1 are the cause of a decreased in urinary kallikrein activity [MIM:615953]. The His-77 mutation dramatically reduces the activity of the enzyme in the urine. There is a 50 to 60% reduction in urinary kallikrein activity in His-77 individuals, but renal and hormonal adaptation to dietary changes in sodium and potassium are unaffected. However, in studies of brachial artery function, His-77 individuals consistently exhibited an increase in wall shear stress and a paradoxical reduction in artery diameter and lumen compared to Arg-77 individuals. This partial genetic deficiency in kallikrein activity is associated with a form of arterial dysfunction involving inappropriate inward remodeling of the brachial artery despite a chronic increase in shear stress.</text>
</comment>
<comment type="similarity">
    <text evidence="1">Belongs to the peptidase S1 family. Kallikrein subfamily.</text>
</comment>
<comment type="online information" name="Wikipedia">
    <link uri="https://en.wikipedia.org/wiki/Kallikrein"/>
    <text>Kallikrein entry</text>
</comment>
<evidence type="ECO:0000255" key="1">
    <source>
        <dbReference type="PROSITE-ProRule" id="PRU00274"/>
    </source>
</evidence>
<evidence type="ECO:0000269" key="2">
    <source>
    </source>
</evidence>
<evidence type="ECO:0000269" key="3">
    <source>
    </source>
</evidence>
<evidence type="ECO:0000269" key="4">
    <source>
    </source>
</evidence>
<evidence type="ECO:0000269" key="5">
    <source>
    </source>
</evidence>
<evidence type="ECO:0000269" key="6">
    <source>
    </source>
</evidence>
<evidence type="ECO:0000269" key="7">
    <source>
    </source>
</evidence>
<evidence type="ECO:0000269" key="8">
    <source>
    </source>
</evidence>
<evidence type="ECO:0000269" key="9">
    <source>
    </source>
</evidence>
<evidence type="ECO:0000269" key="10">
    <source>
    </source>
</evidence>
<evidence type="ECO:0000269" key="11">
    <source>
    </source>
</evidence>
<evidence type="ECO:0000269" key="12">
    <source ref="7"/>
</evidence>
<evidence type="ECO:0000269" key="13">
    <source ref="8"/>
</evidence>
<evidence type="ECO:0000269" key="14">
    <source ref="9"/>
</evidence>
<evidence type="ECO:0000303" key="15">
    <source>
    </source>
</evidence>
<evidence type="ECO:0000305" key="16"/>
<evidence type="ECO:0007829" key="17">
    <source>
        <dbReference type="PDB" id="1SPJ"/>
    </source>
</evidence>
<evidence type="ECO:0007829" key="18">
    <source>
        <dbReference type="PDB" id="8YGY"/>
    </source>
</evidence>